<dbReference type="EMBL" id="U62004">
    <property type="protein sequence ID" value="AAC47282.1"/>
    <property type="molecule type" value="mRNA"/>
</dbReference>
<dbReference type="EMBL" id="AE014134">
    <property type="protein sequence ID" value="AAF51087.1"/>
    <property type="molecule type" value="Genomic_DNA"/>
</dbReference>
<dbReference type="EMBL" id="BT003205">
    <property type="protein sequence ID" value="AAO24960.1"/>
    <property type="molecule type" value="mRNA"/>
</dbReference>
<dbReference type="PIR" id="S72227">
    <property type="entry name" value="S72227"/>
</dbReference>
<dbReference type="RefSeq" id="NP_476882.1">
    <property type="nucleotide sequence ID" value="NM_057534.4"/>
</dbReference>
<dbReference type="SMR" id="Q9VQS7"/>
<dbReference type="BioGRID" id="59790">
    <property type="interactions" value="15"/>
</dbReference>
<dbReference type="FunCoup" id="Q9VQS7">
    <property type="interactions" value="43"/>
</dbReference>
<dbReference type="IntAct" id="Q9VQS7">
    <property type="interactions" value="10"/>
</dbReference>
<dbReference type="STRING" id="7227.FBpp0077247"/>
<dbReference type="PaxDb" id="7227-FBpp0077247"/>
<dbReference type="DNASU" id="33581"/>
<dbReference type="EnsemblMetazoa" id="FBtr0077558">
    <property type="protein sequence ID" value="FBpp0077247"/>
    <property type="gene ID" value="FBgn0004892"/>
</dbReference>
<dbReference type="GeneID" id="33581"/>
<dbReference type="KEGG" id="dme:Dmel_CG3242"/>
<dbReference type="AGR" id="FB:FBgn0004892"/>
<dbReference type="CTD" id="33581"/>
<dbReference type="FlyBase" id="FBgn0004892">
    <property type="gene designation" value="sob"/>
</dbReference>
<dbReference type="VEuPathDB" id="VectorBase:FBgn0004892"/>
<dbReference type="eggNOG" id="KOG1721">
    <property type="taxonomic scope" value="Eukaryota"/>
</dbReference>
<dbReference type="GeneTree" id="ENSGT00940000168461"/>
<dbReference type="HOGENOM" id="CLU_027599_1_1_1"/>
<dbReference type="InParanoid" id="Q9VQS7"/>
<dbReference type="OMA" id="TMYQDKL"/>
<dbReference type="OrthoDB" id="9451254at2759"/>
<dbReference type="PhylomeDB" id="Q9VQS7"/>
<dbReference type="BioGRID-ORCS" id="33581">
    <property type="hits" value="0 hits in 3 CRISPR screens"/>
</dbReference>
<dbReference type="GenomeRNAi" id="33581"/>
<dbReference type="PRO" id="PR:Q9VQS7"/>
<dbReference type="Proteomes" id="UP000000803">
    <property type="component" value="Chromosome 2L"/>
</dbReference>
<dbReference type="Bgee" id="FBgn0004892">
    <property type="expression patterns" value="Expressed in adult Malpighian tubule principal cell of lower ureter in Malpighian tubule and 61 other cell types or tissues"/>
</dbReference>
<dbReference type="GO" id="GO:0005634">
    <property type="term" value="C:nucleus"/>
    <property type="evidence" value="ECO:0000250"/>
    <property type="project" value="FlyBase"/>
</dbReference>
<dbReference type="GO" id="GO:0000981">
    <property type="term" value="F:DNA-binding transcription factor activity, RNA polymerase II-specific"/>
    <property type="evidence" value="ECO:0000250"/>
    <property type="project" value="FlyBase"/>
</dbReference>
<dbReference type="GO" id="GO:0000977">
    <property type="term" value="F:RNA polymerase II transcription regulatory region sequence-specific DNA binding"/>
    <property type="evidence" value="ECO:0000318"/>
    <property type="project" value="GO_Central"/>
</dbReference>
<dbReference type="GO" id="GO:0008270">
    <property type="term" value="F:zinc ion binding"/>
    <property type="evidence" value="ECO:0007669"/>
    <property type="project" value="UniProtKB-KW"/>
</dbReference>
<dbReference type="GO" id="GO:0007350">
    <property type="term" value="P:blastoderm segmentation"/>
    <property type="evidence" value="ECO:0000250"/>
    <property type="project" value="UniProtKB"/>
</dbReference>
<dbReference type="GO" id="GO:0048619">
    <property type="term" value="P:embryonic hindgut morphogenesis"/>
    <property type="evidence" value="ECO:0000318"/>
    <property type="project" value="GO_Central"/>
</dbReference>
<dbReference type="GO" id="GO:0009880">
    <property type="term" value="P:embryonic pattern specification"/>
    <property type="evidence" value="ECO:0000318"/>
    <property type="project" value="GO_Central"/>
</dbReference>
<dbReference type="GO" id="GO:0016348">
    <property type="term" value="P:imaginal disc-derived leg joint morphogenesis"/>
    <property type="evidence" value="ECO:0000315"/>
    <property type="project" value="FlyBase"/>
</dbReference>
<dbReference type="GO" id="GO:0045892">
    <property type="term" value="P:negative regulation of DNA-templated transcription"/>
    <property type="evidence" value="ECO:0000250"/>
    <property type="project" value="UniProtKB"/>
</dbReference>
<dbReference type="GO" id="GO:0000122">
    <property type="term" value="P:negative regulation of transcription by RNA polymerase II"/>
    <property type="evidence" value="ECO:0000250"/>
    <property type="project" value="UniProtKB"/>
</dbReference>
<dbReference type="GO" id="GO:0007366">
    <property type="term" value="P:periodic partitioning by pair rule gene"/>
    <property type="evidence" value="ECO:0000250"/>
    <property type="project" value="UniProtKB"/>
</dbReference>
<dbReference type="GO" id="GO:0045893">
    <property type="term" value="P:positive regulation of DNA-templated transcription"/>
    <property type="evidence" value="ECO:0000250"/>
    <property type="project" value="UniProtKB"/>
</dbReference>
<dbReference type="GO" id="GO:0045944">
    <property type="term" value="P:positive regulation of transcription by RNA polymerase II"/>
    <property type="evidence" value="ECO:0000250"/>
    <property type="project" value="UniProtKB"/>
</dbReference>
<dbReference type="GO" id="GO:0006355">
    <property type="term" value="P:regulation of DNA-templated transcription"/>
    <property type="evidence" value="ECO:0000250"/>
    <property type="project" value="FlyBase"/>
</dbReference>
<dbReference type="FunFam" id="3.30.160.60:FF:000958">
    <property type="entry name" value="Odd skipped"/>
    <property type="match status" value="1"/>
</dbReference>
<dbReference type="FunFam" id="3.30.160.60:FF:000254">
    <property type="entry name" value="Odd-skipped related transciption factor 1"/>
    <property type="match status" value="1"/>
</dbReference>
<dbReference type="FunFam" id="3.30.160.60:FF:000318">
    <property type="entry name" value="Odd-skipped-related transciption factor 2"/>
    <property type="match status" value="1"/>
</dbReference>
<dbReference type="FunFam" id="3.30.160.60:FF:000311">
    <property type="entry name" value="protein odd-skipped-related 2 isoform X1"/>
    <property type="match status" value="1"/>
</dbReference>
<dbReference type="FunFam" id="3.30.160.60:FF:000148">
    <property type="entry name" value="zinc finger protein Gfi-1"/>
    <property type="match status" value="1"/>
</dbReference>
<dbReference type="Gene3D" id="3.30.160.60">
    <property type="entry name" value="Classic Zinc Finger"/>
    <property type="match status" value="5"/>
</dbReference>
<dbReference type="InterPro" id="IPR050717">
    <property type="entry name" value="C2H2-ZF_Transcription_Reg"/>
</dbReference>
<dbReference type="InterPro" id="IPR036236">
    <property type="entry name" value="Znf_C2H2_sf"/>
</dbReference>
<dbReference type="InterPro" id="IPR013087">
    <property type="entry name" value="Znf_C2H2_type"/>
</dbReference>
<dbReference type="PANTHER" id="PTHR14196">
    <property type="entry name" value="ODD-SKIPPED - RELATED"/>
    <property type="match status" value="1"/>
</dbReference>
<dbReference type="PANTHER" id="PTHR14196:SF11">
    <property type="entry name" value="PROTEIN SISTER OF ODD AND BOWEL"/>
    <property type="match status" value="1"/>
</dbReference>
<dbReference type="Pfam" id="PF00096">
    <property type="entry name" value="zf-C2H2"/>
    <property type="match status" value="5"/>
</dbReference>
<dbReference type="SMART" id="SM00355">
    <property type="entry name" value="ZnF_C2H2"/>
    <property type="match status" value="5"/>
</dbReference>
<dbReference type="SUPFAM" id="SSF57667">
    <property type="entry name" value="beta-beta-alpha zinc fingers"/>
    <property type="match status" value="3"/>
</dbReference>
<dbReference type="PROSITE" id="PS00028">
    <property type="entry name" value="ZINC_FINGER_C2H2_1"/>
    <property type="match status" value="5"/>
</dbReference>
<dbReference type="PROSITE" id="PS50157">
    <property type="entry name" value="ZINC_FINGER_C2H2_2"/>
    <property type="match status" value="5"/>
</dbReference>
<accession>Q9VQS7</accession>
<accession>Q24571</accession>
<reference evidence="8 9" key="1">
    <citation type="journal article" date="1996" name="Genetics">
        <title>Comparison of the structure and expression of odd-skipped and two related genes that encode a new family of zinc finger proteins in Drosophila.</title>
        <authorList>
            <person name="Hart M.C."/>
            <person name="Wang L."/>
            <person name="Coulter D.E."/>
        </authorList>
    </citation>
    <scope>NUCLEOTIDE SEQUENCE [MRNA]</scope>
    <scope>TISSUE SPECIFICITY</scope>
    <source>
        <strain evidence="7">Canton-S</strain>
        <tissue evidence="7">Embryo</tissue>
    </source>
</reference>
<reference evidence="10" key="2">
    <citation type="journal article" date="2000" name="Science">
        <title>The genome sequence of Drosophila melanogaster.</title>
        <authorList>
            <person name="Adams M.D."/>
            <person name="Celniker S.E."/>
            <person name="Holt R.A."/>
            <person name="Evans C.A."/>
            <person name="Gocayne J.D."/>
            <person name="Amanatides P.G."/>
            <person name="Scherer S.E."/>
            <person name="Li P.W."/>
            <person name="Hoskins R.A."/>
            <person name="Galle R.F."/>
            <person name="George R.A."/>
            <person name="Lewis S.E."/>
            <person name="Richards S."/>
            <person name="Ashburner M."/>
            <person name="Henderson S.N."/>
            <person name="Sutton G.G."/>
            <person name="Wortman J.R."/>
            <person name="Yandell M.D."/>
            <person name="Zhang Q."/>
            <person name="Chen L.X."/>
            <person name="Brandon R.C."/>
            <person name="Rogers Y.-H.C."/>
            <person name="Blazej R.G."/>
            <person name="Champe M."/>
            <person name="Pfeiffer B.D."/>
            <person name="Wan K.H."/>
            <person name="Doyle C."/>
            <person name="Baxter E.G."/>
            <person name="Helt G."/>
            <person name="Nelson C.R."/>
            <person name="Miklos G.L.G."/>
            <person name="Abril J.F."/>
            <person name="Agbayani A."/>
            <person name="An H.-J."/>
            <person name="Andrews-Pfannkoch C."/>
            <person name="Baldwin D."/>
            <person name="Ballew R.M."/>
            <person name="Basu A."/>
            <person name="Baxendale J."/>
            <person name="Bayraktaroglu L."/>
            <person name="Beasley E.M."/>
            <person name="Beeson K.Y."/>
            <person name="Benos P.V."/>
            <person name="Berman B.P."/>
            <person name="Bhandari D."/>
            <person name="Bolshakov S."/>
            <person name="Borkova D."/>
            <person name="Botchan M.R."/>
            <person name="Bouck J."/>
            <person name="Brokstein P."/>
            <person name="Brottier P."/>
            <person name="Burtis K.C."/>
            <person name="Busam D.A."/>
            <person name="Butler H."/>
            <person name="Cadieu E."/>
            <person name="Center A."/>
            <person name="Chandra I."/>
            <person name="Cherry J.M."/>
            <person name="Cawley S."/>
            <person name="Dahlke C."/>
            <person name="Davenport L.B."/>
            <person name="Davies P."/>
            <person name="de Pablos B."/>
            <person name="Delcher A."/>
            <person name="Deng Z."/>
            <person name="Mays A.D."/>
            <person name="Dew I."/>
            <person name="Dietz S.M."/>
            <person name="Dodson K."/>
            <person name="Doup L.E."/>
            <person name="Downes M."/>
            <person name="Dugan-Rocha S."/>
            <person name="Dunkov B.C."/>
            <person name="Dunn P."/>
            <person name="Durbin K.J."/>
            <person name="Evangelista C.C."/>
            <person name="Ferraz C."/>
            <person name="Ferriera S."/>
            <person name="Fleischmann W."/>
            <person name="Fosler C."/>
            <person name="Gabrielian A.E."/>
            <person name="Garg N.S."/>
            <person name="Gelbart W.M."/>
            <person name="Glasser K."/>
            <person name="Glodek A."/>
            <person name="Gong F."/>
            <person name="Gorrell J.H."/>
            <person name="Gu Z."/>
            <person name="Guan P."/>
            <person name="Harris M."/>
            <person name="Harris N.L."/>
            <person name="Harvey D.A."/>
            <person name="Heiman T.J."/>
            <person name="Hernandez J.R."/>
            <person name="Houck J."/>
            <person name="Hostin D."/>
            <person name="Houston K.A."/>
            <person name="Howland T.J."/>
            <person name="Wei M.-H."/>
            <person name="Ibegwam C."/>
            <person name="Jalali M."/>
            <person name="Kalush F."/>
            <person name="Karpen G.H."/>
            <person name="Ke Z."/>
            <person name="Kennison J.A."/>
            <person name="Ketchum K.A."/>
            <person name="Kimmel B.E."/>
            <person name="Kodira C.D."/>
            <person name="Kraft C.L."/>
            <person name="Kravitz S."/>
            <person name="Kulp D."/>
            <person name="Lai Z."/>
            <person name="Lasko P."/>
            <person name="Lei Y."/>
            <person name="Levitsky A.A."/>
            <person name="Li J.H."/>
            <person name="Li Z."/>
            <person name="Liang Y."/>
            <person name="Lin X."/>
            <person name="Liu X."/>
            <person name="Mattei B."/>
            <person name="McIntosh T.C."/>
            <person name="McLeod M.P."/>
            <person name="McPherson D."/>
            <person name="Merkulov G."/>
            <person name="Milshina N.V."/>
            <person name="Mobarry C."/>
            <person name="Morris J."/>
            <person name="Moshrefi A."/>
            <person name="Mount S.M."/>
            <person name="Moy M."/>
            <person name="Murphy B."/>
            <person name="Murphy L."/>
            <person name="Muzny D.M."/>
            <person name="Nelson D.L."/>
            <person name="Nelson D.R."/>
            <person name="Nelson K.A."/>
            <person name="Nixon K."/>
            <person name="Nusskern D.R."/>
            <person name="Pacleb J.M."/>
            <person name="Palazzolo M."/>
            <person name="Pittman G.S."/>
            <person name="Pan S."/>
            <person name="Pollard J."/>
            <person name="Puri V."/>
            <person name="Reese M.G."/>
            <person name="Reinert K."/>
            <person name="Remington K."/>
            <person name="Saunders R.D.C."/>
            <person name="Scheeler F."/>
            <person name="Shen H."/>
            <person name="Shue B.C."/>
            <person name="Siden-Kiamos I."/>
            <person name="Simpson M."/>
            <person name="Skupski M.P."/>
            <person name="Smith T.J."/>
            <person name="Spier E."/>
            <person name="Spradling A.C."/>
            <person name="Stapleton M."/>
            <person name="Strong R."/>
            <person name="Sun E."/>
            <person name="Svirskas R."/>
            <person name="Tector C."/>
            <person name="Turner R."/>
            <person name="Venter E."/>
            <person name="Wang A.H."/>
            <person name="Wang X."/>
            <person name="Wang Z.-Y."/>
            <person name="Wassarman D.A."/>
            <person name="Weinstock G.M."/>
            <person name="Weissenbach J."/>
            <person name="Williams S.M."/>
            <person name="Woodage T."/>
            <person name="Worley K.C."/>
            <person name="Wu D."/>
            <person name="Yang S."/>
            <person name="Yao Q.A."/>
            <person name="Ye J."/>
            <person name="Yeh R.-F."/>
            <person name="Zaveri J.S."/>
            <person name="Zhan M."/>
            <person name="Zhang G."/>
            <person name="Zhao Q."/>
            <person name="Zheng L."/>
            <person name="Zheng X.H."/>
            <person name="Zhong F.N."/>
            <person name="Zhong W."/>
            <person name="Zhou X."/>
            <person name="Zhu S.C."/>
            <person name="Zhu X."/>
            <person name="Smith H.O."/>
            <person name="Gibbs R.A."/>
            <person name="Myers E.W."/>
            <person name="Rubin G.M."/>
            <person name="Venter J.C."/>
        </authorList>
    </citation>
    <scope>NUCLEOTIDE SEQUENCE [LARGE SCALE GENOMIC DNA]</scope>
    <source>
        <strain evidence="4">Berkeley</strain>
    </source>
</reference>
<reference evidence="8 10" key="3">
    <citation type="journal article" date="2002" name="Genome Biol.">
        <title>Annotation of the Drosophila melanogaster euchromatic genome: a systematic review.</title>
        <authorList>
            <person name="Misra S."/>
            <person name="Crosby M.A."/>
            <person name="Mungall C.J."/>
            <person name="Matthews B.B."/>
            <person name="Campbell K.S."/>
            <person name="Hradecky P."/>
            <person name="Huang Y."/>
            <person name="Kaminker J.S."/>
            <person name="Millburn G.H."/>
            <person name="Prochnik S.E."/>
            <person name="Smith C.D."/>
            <person name="Tupy J.L."/>
            <person name="Whitfield E.J."/>
            <person name="Bayraktaroglu L."/>
            <person name="Berman B.P."/>
            <person name="Bettencourt B.R."/>
            <person name="Celniker S.E."/>
            <person name="de Grey A.D.N.J."/>
            <person name="Drysdale R.A."/>
            <person name="Harris N.L."/>
            <person name="Richter J."/>
            <person name="Russo S."/>
            <person name="Schroeder A.J."/>
            <person name="Shu S.Q."/>
            <person name="Stapleton M."/>
            <person name="Yamada C."/>
            <person name="Ashburner M."/>
            <person name="Gelbart W.M."/>
            <person name="Rubin G.M."/>
            <person name="Lewis S.E."/>
        </authorList>
    </citation>
    <scope>GENOME REANNOTATION</scope>
    <source>
        <strain>Berkeley</strain>
    </source>
</reference>
<reference evidence="11" key="4">
    <citation type="submission" date="2003-01" db="EMBL/GenBank/DDBJ databases">
        <authorList>
            <person name="Stapleton M."/>
            <person name="Brokstein P."/>
            <person name="Hong L."/>
            <person name="Agbayani A."/>
            <person name="Carlson J.W."/>
            <person name="Champe M."/>
            <person name="Chavez C."/>
            <person name="Dorsett V."/>
            <person name="Dresnek D."/>
            <person name="Farfan D."/>
            <person name="Frise E."/>
            <person name="George R.A."/>
            <person name="Gonzalez M."/>
            <person name="Guarin H."/>
            <person name="Kronmiller B."/>
            <person name="Li P.W."/>
            <person name="Liao G."/>
            <person name="Miranda A."/>
            <person name="Mungall C.J."/>
            <person name="Nunoo J."/>
            <person name="Pacleb J.M."/>
            <person name="Paragas V."/>
            <person name="Park S."/>
            <person name="Patel S."/>
            <person name="Phouanenavong S."/>
            <person name="Wan K.H."/>
            <person name="Yu C."/>
            <person name="Lewis S.E."/>
            <person name="Rubin G.M."/>
            <person name="Celniker S.E."/>
        </authorList>
    </citation>
    <scope>NUCLEOTIDE SEQUENCE [LARGE SCALE MRNA]</scope>
    <source>
        <strain evidence="11">Berkeley</strain>
        <tissue>Embryo</tissue>
    </source>
</reference>
<reference evidence="8" key="5">
    <citation type="journal article" date="2003" name="Dev. Biol.">
        <title>The odd-skipped family of zinc finger genes promotes Drosophila leg segmentation.</title>
        <authorList>
            <person name="Hao I."/>
            <person name="Green R.B."/>
            <person name="Dunaevsky O."/>
            <person name="Lengyel J.A."/>
            <person name="Rauskolb C."/>
        </authorList>
    </citation>
    <scope>POSSIBLE FUNCTION</scope>
    <scope>TISSUE SPECIFICITY</scope>
</reference>
<reference evidence="8" key="6">
    <citation type="journal article" date="2003" name="Mech. Dev.">
        <title>The Drm-Bowl-Lin relief-of-repression hierarchy controls fore- and hindgut patterning and morphogenesis.</title>
        <authorList>
            <person name="Johansen K.A."/>
            <person name="Green R.B."/>
            <person name="Iwaki D.D."/>
            <person name="Hernandez J.B."/>
            <person name="Lengyel J.A."/>
        </authorList>
    </citation>
    <scope>TISSUE SPECIFICITY</scope>
</reference>
<keyword id="KW-0010">Activator</keyword>
<keyword id="KW-0217">Developmental protein</keyword>
<keyword id="KW-0238">DNA-binding</keyword>
<keyword id="KW-0479">Metal-binding</keyword>
<keyword id="KW-0539">Nucleus</keyword>
<keyword id="KW-0562">Pair-rule protein</keyword>
<keyword id="KW-1185">Reference proteome</keyword>
<keyword id="KW-0677">Repeat</keyword>
<keyword id="KW-0678">Repressor</keyword>
<keyword id="KW-0804">Transcription</keyword>
<keyword id="KW-0805">Transcription regulation</keyword>
<keyword id="KW-0862">Zinc</keyword>
<keyword id="KW-0863">Zinc-finger</keyword>
<feature type="chain" id="PRO_0000046928" description="Protein sister of odd and bowel">
    <location>
        <begin position="1"/>
        <end position="578"/>
    </location>
</feature>
<feature type="zinc finger region" description="C2H2-type 1" evidence="2">
    <location>
        <begin position="395"/>
        <end position="417"/>
    </location>
</feature>
<feature type="zinc finger region" description="C2H2-type 2" evidence="2">
    <location>
        <begin position="423"/>
        <end position="445"/>
    </location>
</feature>
<feature type="zinc finger region" description="C2H2-type 3" evidence="2">
    <location>
        <begin position="451"/>
        <end position="473"/>
    </location>
</feature>
<feature type="zinc finger region" description="C2H2-type 4" evidence="2">
    <location>
        <begin position="479"/>
        <end position="501"/>
    </location>
</feature>
<feature type="zinc finger region" description="C2H2-type 5" evidence="2">
    <location>
        <begin position="507"/>
        <end position="529"/>
    </location>
</feature>
<feature type="region of interest" description="Disordered" evidence="3">
    <location>
        <begin position="55"/>
        <end position="92"/>
    </location>
</feature>
<feature type="region of interest" description="Disordered" evidence="3">
    <location>
        <begin position="183"/>
        <end position="204"/>
    </location>
</feature>
<feature type="region of interest" description="Disordered" evidence="3">
    <location>
        <begin position="224"/>
        <end position="262"/>
    </location>
</feature>
<feature type="region of interest" description="Disordered" evidence="3">
    <location>
        <begin position="547"/>
        <end position="578"/>
    </location>
</feature>
<feature type="compositionally biased region" description="Low complexity" evidence="3">
    <location>
        <begin position="183"/>
        <end position="202"/>
    </location>
</feature>
<feature type="compositionally biased region" description="Low complexity" evidence="3">
    <location>
        <begin position="224"/>
        <end position="261"/>
    </location>
</feature>
<feature type="sequence conflict" description="In Ref. 1; AAC47282." evidence="8" ref="1">
    <original>S</original>
    <variation>P</variation>
    <location>
        <position position="176"/>
    </location>
</feature>
<feature type="sequence conflict" description="In Ref. 1; AAC47282." evidence="8" ref="1">
    <original>SS</original>
    <variation>G</variation>
    <location>
        <begin position="188"/>
        <end position="189"/>
    </location>
</feature>
<feature type="sequence conflict" description="In Ref. 1; AAC47282." evidence="8" ref="1">
    <original>P</original>
    <variation>L</variation>
    <location>
        <position position="546"/>
    </location>
</feature>
<proteinExistence type="evidence at transcript level"/>
<sequence length="578" mass="58455">MEAVKHLSAAAAAAAAAATCSDSPAKAAASPAASSDIAEALGELKASATAAASSASKAATSKHHSNNNHKPSAAATATAAHKKSESCNSNGNKCTAATSPIGSKTSNAAMAAATATAAAATNDLAAAAAVVLSLQGTMVSSLQQAALLPANSAAAAALNLQALESYLALQRLTGKSDVFRFSNSNTGSSNSNNATTCNSSSSEADNNALPSLIDIANIELKSSCSSSSSGEPPLTAATASAAATSSPSSNNSNSTSTPTTSKCVPLPSIGTVSAAVAAAAAAAAAAASQQAALDCATAAELAAECDLPLLDGEDALSFEAGDLDSSYGSFMFNPSAFSQAETDSALHSLQATMYQDKMSVISGAAGGVGAGAVGGLEEAGSSAAAAAAQRSKKQFICKFCNRQFTKSYNLLIHERTHTDERPYSCDICGKAFRRQDHLRDHRYIHSKEKPFKCAECGKGFCQSRTLAVHKILHMEESPHKCPVCNRSFNQRSNLKTHLLTHTDIKPYNCASCGKVFRRNCDLRRHSLTHNLSAGVGGVVGGNLSDPFGSGSSSSSELGLPTGSASTAASSRDLVAVSD</sequence>
<organism>
    <name type="scientific">Drosophila melanogaster</name>
    <name type="common">Fruit fly</name>
    <dbReference type="NCBI Taxonomy" id="7227"/>
    <lineage>
        <taxon>Eukaryota</taxon>
        <taxon>Metazoa</taxon>
        <taxon>Ecdysozoa</taxon>
        <taxon>Arthropoda</taxon>
        <taxon>Hexapoda</taxon>
        <taxon>Insecta</taxon>
        <taxon>Pterygota</taxon>
        <taxon>Neoptera</taxon>
        <taxon>Endopterygota</taxon>
        <taxon>Diptera</taxon>
        <taxon>Brachycera</taxon>
        <taxon>Muscomorpha</taxon>
        <taxon>Ephydroidea</taxon>
        <taxon>Drosophilidae</taxon>
        <taxon>Drosophila</taxon>
        <taxon>Sophophora</taxon>
    </lineage>
</organism>
<gene>
    <name evidence="12" type="primary">sob</name>
    <name type="ORF">CG3242</name>
</gene>
<protein>
    <recommendedName>
        <fullName>Protein sister of odd and bowel</fullName>
    </recommendedName>
</protein>
<comment type="function">
    <text evidence="1 6">Pair-rule protein that determines both the size and polarity of even-numbered as well as odd-numbered parasegments during embryogenesis. DNA-binding transcription factor that acts primarily as a transcriptional repressor but can also function as a transcriptional activator, depending on the stage of development and spatial restrictions (By similarity). May function redundantly with odd and drm in leg joint formation during the larval stages, acting downstream of Notch activation.</text>
</comment>
<comment type="subcellular location">
    <subcellularLocation>
        <location evidence="8">Nucleus</location>
    </subcellularLocation>
</comment>
<comment type="tissue specificity">
    <text evidence="5 6 7">Has two temporally distinct modes of expression during early embryogenesis; expressed in seven stripes at the blastoderm stage. Also expressed in a non-periodic domain at the anterior of the embryo. During gastrulation, the seven primary stripes are supplemented by seven secondary stripes that appear in alternate segments. This results in the labelling of each of the 14 segments in the extended germ band. Expression is relatively weak at the blastoderm stage, gaining in intensity at gastrulation. Expressed in the invaginating stomodeum and proctodeum of the embryonic gut. By stage 13, expressed in the region that will form the proventriculus and in a wide ring at the most posterior portion of the midgut. Expression continues in the gut through the remainder of embryogenesis. Expressed in the proximal Malpighian tubules, brain and pharyngeal muscles during late embryogenesis. Expressed weakly in a segmentally repeated pattern in the leg disk at the distal edge of each presumptive leg segment except in tarsal segments 1 to 4.</text>
</comment>
<evidence type="ECO:0000250" key="1">
    <source>
        <dbReference type="UniProtKB" id="P23803"/>
    </source>
</evidence>
<evidence type="ECO:0000255" key="2">
    <source>
        <dbReference type="PROSITE-ProRule" id="PRU00042"/>
    </source>
</evidence>
<evidence type="ECO:0000256" key="3">
    <source>
        <dbReference type="SAM" id="MobiDB-lite"/>
    </source>
</evidence>
<evidence type="ECO:0000269" key="4">
    <source>
    </source>
</evidence>
<evidence type="ECO:0000269" key="5">
    <source>
    </source>
</evidence>
<evidence type="ECO:0000269" key="6">
    <source>
    </source>
</evidence>
<evidence type="ECO:0000269" key="7">
    <source>
    </source>
</evidence>
<evidence type="ECO:0000305" key="8"/>
<evidence type="ECO:0000312" key="9">
    <source>
        <dbReference type="EMBL" id="AAC47282.1"/>
    </source>
</evidence>
<evidence type="ECO:0000312" key="10">
    <source>
        <dbReference type="EMBL" id="AAF51087.1"/>
    </source>
</evidence>
<evidence type="ECO:0000312" key="11">
    <source>
        <dbReference type="EMBL" id="AAO24960.1"/>
    </source>
</evidence>
<evidence type="ECO:0000312" key="12">
    <source>
        <dbReference type="FlyBase" id="FBgn0004892"/>
    </source>
</evidence>
<name>SOB_DROME</name>